<reference key="1">
    <citation type="journal article" date="2006" name="Genome Res.">
        <title>Skewed genomic variability in strains of the toxigenic bacterial pathogen, Clostridium perfringens.</title>
        <authorList>
            <person name="Myers G.S.A."/>
            <person name="Rasko D.A."/>
            <person name="Cheung J.K."/>
            <person name="Ravel J."/>
            <person name="Seshadri R."/>
            <person name="DeBoy R.T."/>
            <person name="Ren Q."/>
            <person name="Varga J."/>
            <person name="Awad M.M."/>
            <person name="Brinkac L.M."/>
            <person name="Daugherty S.C."/>
            <person name="Haft D.H."/>
            <person name="Dodson R.J."/>
            <person name="Madupu R."/>
            <person name="Nelson W.C."/>
            <person name="Rosovitz M.J."/>
            <person name="Sullivan S.A."/>
            <person name="Khouri H."/>
            <person name="Dimitrov G.I."/>
            <person name="Watkins K.L."/>
            <person name="Mulligan S."/>
            <person name="Benton J."/>
            <person name="Radune D."/>
            <person name="Fisher D.J."/>
            <person name="Atkins H.S."/>
            <person name="Hiscox T."/>
            <person name="Jost B.H."/>
            <person name="Billington S.J."/>
            <person name="Songer J.G."/>
            <person name="McClane B.A."/>
            <person name="Titball R.W."/>
            <person name="Rood J.I."/>
            <person name="Melville S.B."/>
            <person name="Paulsen I.T."/>
        </authorList>
    </citation>
    <scope>NUCLEOTIDE SEQUENCE [LARGE SCALE GENOMIC DNA]</scope>
    <source>
        <strain>SM101 / Type A</strain>
    </source>
</reference>
<gene>
    <name evidence="1" type="primary">tsf</name>
    <name type="ordered locus">CPR_1671</name>
</gene>
<evidence type="ECO:0000255" key="1">
    <source>
        <dbReference type="HAMAP-Rule" id="MF_00050"/>
    </source>
</evidence>
<accession>Q0SSC1</accession>
<organism>
    <name type="scientific">Clostridium perfringens (strain SM101 / Type A)</name>
    <dbReference type="NCBI Taxonomy" id="289380"/>
    <lineage>
        <taxon>Bacteria</taxon>
        <taxon>Bacillati</taxon>
        <taxon>Bacillota</taxon>
        <taxon>Clostridia</taxon>
        <taxon>Eubacteriales</taxon>
        <taxon>Clostridiaceae</taxon>
        <taxon>Clostridium</taxon>
    </lineage>
</organism>
<name>EFTS_CLOPS</name>
<sequence length="303" mass="33203">MITAKAVKELRERTGAGMMDCKKALTETNGDMEKAVEVLREKGLAAAAKKAGRVAAEGIVKTYVSEDMKKGSIVEINCETDFVALNEEFVGFAGRVAELVANSNVNTVEELLAEKLDGDKTVQEVLTELIAKIGENMSVRRFERFSVESGLVQSYIHGGGRIGVMAELACEASSPVLAEVAKDVCMQIAAANPLFLSEADVDQESLEKEKEIYRAQALNEGKPEHIVDKMVMGRIKKYCKEVCLLDQAWVKDGDKSISKLLEEKSKEVGSPITITKFVRFERGEGIEKKEENFAEEVAKMGGK</sequence>
<protein>
    <recommendedName>
        <fullName evidence="1">Elongation factor Ts</fullName>
        <shortName evidence="1">EF-Ts</shortName>
    </recommendedName>
</protein>
<feature type="chain" id="PRO_1000006082" description="Elongation factor Ts">
    <location>
        <begin position="1"/>
        <end position="303"/>
    </location>
</feature>
<feature type="region of interest" description="Involved in Mg(2+) ion dislocation from EF-Tu" evidence="1">
    <location>
        <begin position="80"/>
        <end position="83"/>
    </location>
</feature>
<proteinExistence type="inferred from homology"/>
<comment type="function">
    <text evidence="1">Associates with the EF-Tu.GDP complex and induces the exchange of GDP to GTP. It remains bound to the aminoacyl-tRNA.EF-Tu.GTP complex up to the GTP hydrolysis stage on the ribosome.</text>
</comment>
<comment type="subcellular location">
    <subcellularLocation>
        <location evidence="1">Cytoplasm</location>
    </subcellularLocation>
</comment>
<comment type="similarity">
    <text evidence="1">Belongs to the EF-Ts family.</text>
</comment>
<dbReference type="EMBL" id="CP000312">
    <property type="protein sequence ID" value="ABG87400.1"/>
    <property type="molecule type" value="Genomic_DNA"/>
</dbReference>
<dbReference type="RefSeq" id="WP_011592599.1">
    <property type="nucleotide sequence ID" value="NC_008262.1"/>
</dbReference>
<dbReference type="SMR" id="Q0SSC1"/>
<dbReference type="KEGG" id="cpr:CPR_1671"/>
<dbReference type="Proteomes" id="UP000001824">
    <property type="component" value="Chromosome"/>
</dbReference>
<dbReference type="GO" id="GO:0005737">
    <property type="term" value="C:cytoplasm"/>
    <property type="evidence" value="ECO:0007669"/>
    <property type="project" value="UniProtKB-SubCell"/>
</dbReference>
<dbReference type="GO" id="GO:0003746">
    <property type="term" value="F:translation elongation factor activity"/>
    <property type="evidence" value="ECO:0007669"/>
    <property type="project" value="UniProtKB-UniRule"/>
</dbReference>
<dbReference type="CDD" id="cd14275">
    <property type="entry name" value="UBA_EF-Ts"/>
    <property type="match status" value="1"/>
</dbReference>
<dbReference type="FunFam" id="1.10.286.20:FF:000001">
    <property type="entry name" value="Elongation factor Ts"/>
    <property type="match status" value="1"/>
</dbReference>
<dbReference type="FunFam" id="1.10.8.10:FF:000001">
    <property type="entry name" value="Elongation factor Ts"/>
    <property type="match status" value="1"/>
</dbReference>
<dbReference type="Gene3D" id="1.10.286.20">
    <property type="match status" value="1"/>
</dbReference>
<dbReference type="Gene3D" id="1.10.8.10">
    <property type="entry name" value="DNA helicase RuvA subunit, C-terminal domain"/>
    <property type="match status" value="1"/>
</dbReference>
<dbReference type="Gene3D" id="3.30.479.20">
    <property type="entry name" value="Elongation factor Ts, dimerisation domain"/>
    <property type="match status" value="2"/>
</dbReference>
<dbReference type="HAMAP" id="MF_00050">
    <property type="entry name" value="EF_Ts"/>
    <property type="match status" value="1"/>
</dbReference>
<dbReference type="InterPro" id="IPR036402">
    <property type="entry name" value="EF-Ts_dimer_sf"/>
</dbReference>
<dbReference type="InterPro" id="IPR001816">
    <property type="entry name" value="Transl_elong_EFTs/EF1B"/>
</dbReference>
<dbReference type="InterPro" id="IPR014039">
    <property type="entry name" value="Transl_elong_EFTs/EF1B_dimer"/>
</dbReference>
<dbReference type="InterPro" id="IPR018101">
    <property type="entry name" value="Transl_elong_Ts_CS"/>
</dbReference>
<dbReference type="InterPro" id="IPR009060">
    <property type="entry name" value="UBA-like_sf"/>
</dbReference>
<dbReference type="NCBIfam" id="TIGR00116">
    <property type="entry name" value="tsf"/>
    <property type="match status" value="1"/>
</dbReference>
<dbReference type="PANTHER" id="PTHR11741">
    <property type="entry name" value="ELONGATION FACTOR TS"/>
    <property type="match status" value="1"/>
</dbReference>
<dbReference type="PANTHER" id="PTHR11741:SF0">
    <property type="entry name" value="ELONGATION FACTOR TS, MITOCHONDRIAL"/>
    <property type="match status" value="1"/>
</dbReference>
<dbReference type="Pfam" id="PF00889">
    <property type="entry name" value="EF_TS"/>
    <property type="match status" value="1"/>
</dbReference>
<dbReference type="SUPFAM" id="SSF54713">
    <property type="entry name" value="Elongation factor Ts (EF-Ts), dimerisation domain"/>
    <property type="match status" value="2"/>
</dbReference>
<dbReference type="SUPFAM" id="SSF46934">
    <property type="entry name" value="UBA-like"/>
    <property type="match status" value="1"/>
</dbReference>
<dbReference type="PROSITE" id="PS01126">
    <property type="entry name" value="EF_TS_1"/>
    <property type="match status" value="1"/>
</dbReference>
<dbReference type="PROSITE" id="PS01127">
    <property type="entry name" value="EF_TS_2"/>
    <property type="match status" value="1"/>
</dbReference>
<keyword id="KW-0963">Cytoplasm</keyword>
<keyword id="KW-0251">Elongation factor</keyword>
<keyword id="KW-0648">Protein biosynthesis</keyword>